<organism>
    <name type="scientific">Listeria monocytogenes serotype 4b (strain F2365)</name>
    <dbReference type="NCBI Taxonomy" id="265669"/>
    <lineage>
        <taxon>Bacteria</taxon>
        <taxon>Bacillati</taxon>
        <taxon>Bacillota</taxon>
        <taxon>Bacilli</taxon>
        <taxon>Bacillales</taxon>
        <taxon>Listeriaceae</taxon>
        <taxon>Listeria</taxon>
    </lineage>
</organism>
<proteinExistence type="inferred from homology"/>
<feature type="chain" id="PRO_0000176649" description="Large ribosomal subunit protein bL9">
    <location>
        <begin position="1"/>
        <end position="148"/>
    </location>
</feature>
<sequence>MKVIFLKDVKGKGKKGETKNVADGYANNFLIKNGYAVEANNAALSTLSAQKKKEDKLAAEELAEAKALKEKMENLTVELKAKSGEGGRLFGSITSKQIAQTLEKTHGIKIDKRKMDLPEAIRALGHTKVPVKLHHEVTATLDVHVSEE</sequence>
<keyword id="KW-0687">Ribonucleoprotein</keyword>
<keyword id="KW-0689">Ribosomal protein</keyword>
<keyword id="KW-0694">RNA-binding</keyword>
<keyword id="KW-0699">rRNA-binding</keyword>
<reference key="1">
    <citation type="journal article" date="2004" name="Nucleic Acids Res.">
        <title>Whole genome comparisons of serotype 4b and 1/2a strains of the food-borne pathogen Listeria monocytogenes reveal new insights into the core genome components of this species.</title>
        <authorList>
            <person name="Nelson K.E."/>
            <person name="Fouts D.E."/>
            <person name="Mongodin E.F."/>
            <person name="Ravel J."/>
            <person name="DeBoy R.T."/>
            <person name="Kolonay J.F."/>
            <person name="Rasko D.A."/>
            <person name="Angiuoli S.V."/>
            <person name="Gill S.R."/>
            <person name="Paulsen I.T."/>
            <person name="Peterson J.D."/>
            <person name="White O."/>
            <person name="Nelson W.C."/>
            <person name="Nierman W.C."/>
            <person name="Beanan M.J."/>
            <person name="Brinkac L.M."/>
            <person name="Daugherty S.C."/>
            <person name="Dodson R.J."/>
            <person name="Durkin A.S."/>
            <person name="Madupu R."/>
            <person name="Haft D.H."/>
            <person name="Selengut J."/>
            <person name="Van Aken S.E."/>
            <person name="Khouri H.M."/>
            <person name="Fedorova N."/>
            <person name="Forberger H.A."/>
            <person name="Tran B."/>
            <person name="Kathariou S."/>
            <person name="Wonderling L.D."/>
            <person name="Uhlich G.A."/>
            <person name="Bayles D.O."/>
            <person name="Luchansky J.B."/>
            <person name="Fraser C.M."/>
        </authorList>
    </citation>
    <scope>NUCLEOTIDE SEQUENCE [LARGE SCALE GENOMIC DNA]</scope>
    <source>
        <strain>F2365</strain>
    </source>
</reference>
<accession>Q725B1</accession>
<evidence type="ECO:0000255" key="1">
    <source>
        <dbReference type="HAMAP-Rule" id="MF_00503"/>
    </source>
</evidence>
<evidence type="ECO:0000305" key="2"/>
<comment type="function">
    <text evidence="1">Binds to the 23S rRNA.</text>
</comment>
<comment type="similarity">
    <text evidence="1">Belongs to the bacterial ribosomal protein bL9 family.</text>
</comment>
<dbReference type="EMBL" id="AE017262">
    <property type="protein sequence ID" value="AAT02850.1"/>
    <property type="molecule type" value="Genomic_DNA"/>
</dbReference>
<dbReference type="RefSeq" id="WP_003724881.1">
    <property type="nucleotide sequence ID" value="NC_002973.6"/>
</dbReference>
<dbReference type="SMR" id="Q725B1"/>
<dbReference type="KEGG" id="lmf:LMOf2365_0062"/>
<dbReference type="HOGENOM" id="CLU_078938_3_2_9"/>
<dbReference type="GO" id="GO:1990904">
    <property type="term" value="C:ribonucleoprotein complex"/>
    <property type="evidence" value="ECO:0007669"/>
    <property type="project" value="UniProtKB-KW"/>
</dbReference>
<dbReference type="GO" id="GO:0005840">
    <property type="term" value="C:ribosome"/>
    <property type="evidence" value="ECO:0007669"/>
    <property type="project" value="UniProtKB-KW"/>
</dbReference>
<dbReference type="GO" id="GO:0019843">
    <property type="term" value="F:rRNA binding"/>
    <property type="evidence" value="ECO:0007669"/>
    <property type="project" value="UniProtKB-UniRule"/>
</dbReference>
<dbReference type="GO" id="GO:0003735">
    <property type="term" value="F:structural constituent of ribosome"/>
    <property type="evidence" value="ECO:0007669"/>
    <property type="project" value="InterPro"/>
</dbReference>
<dbReference type="GO" id="GO:0006412">
    <property type="term" value="P:translation"/>
    <property type="evidence" value="ECO:0007669"/>
    <property type="project" value="UniProtKB-UniRule"/>
</dbReference>
<dbReference type="FunFam" id="3.10.430.100:FF:000002">
    <property type="entry name" value="50S ribosomal protein L9"/>
    <property type="match status" value="1"/>
</dbReference>
<dbReference type="FunFam" id="3.40.5.10:FF:000002">
    <property type="entry name" value="50S ribosomal protein L9"/>
    <property type="match status" value="1"/>
</dbReference>
<dbReference type="Gene3D" id="3.10.430.100">
    <property type="entry name" value="Ribosomal protein L9, C-terminal domain"/>
    <property type="match status" value="1"/>
</dbReference>
<dbReference type="Gene3D" id="3.40.5.10">
    <property type="entry name" value="Ribosomal protein L9, N-terminal domain"/>
    <property type="match status" value="1"/>
</dbReference>
<dbReference type="HAMAP" id="MF_00503">
    <property type="entry name" value="Ribosomal_bL9"/>
    <property type="match status" value="1"/>
</dbReference>
<dbReference type="InterPro" id="IPR000244">
    <property type="entry name" value="Ribosomal_bL9"/>
</dbReference>
<dbReference type="InterPro" id="IPR009027">
    <property type="entry name" value="Ribosomal_bL9/RNase_H1_N"/>
</dbReference>
<dbReference type="InterPro" id="IPR020594">
    <property type="entry name" value="Ribosomal_bL9_bac/chp"/>
</dbReference>
<dbReference type="InterPro" id="IPR020069">
    <property type="entry name" value="Ribosomal_bL9_C"/>
</dbReference>
<dbReference type="InterPro" id="IPR036791">
    <property type="entry name" value="Ribosomal_bL9_C_sf"/>
</dbReference>
<dbReference type="InterPro" id="IPR020070">
    <property type="entry name" value="Ribosomal_bL9_N"/>
</dbReference>
<dbReference type="InterPro" id="IPR036935">
    <property type="entry name" value="Ribosomal_bL9_N_sf"/>
</dbReference>
<dbReference type="NCBIfam" id="TIGR00158">
    <property type="entry name" value="L9"/>
    <property type="match status" value="1"/>
</dbReference>
<dbReference type="PANTHER" id="PTHR21368">
    <property type="entry name" value="50S RIBOSOMAL PROTEIN L9"/>
    <property type="match status" value="1"/>
</dbReference>
<dbReference type="Pfam" id="PF03948">
    <property type="entry name" value="Ribosomal_L9_C"/>
    <property type="match status" value="1"/>
</dbReference>
<dbReference type="Pfam" id="PF01281">
    <property type="entry name" value="Ribosomal_L9_N"/>
    <property type="match status" value="1"/>
</dbReference>
<dbReference type="SUPFAM" id="SSF55658">
    <property type="entry name" value="L9 N-domain-like"/>
    <property type="match status" value="1"/>
</dbReference>
<dbReference type="SUPFAM" id="SSF55653">
    <property type="entry name" value="Ribosomal protein L9 C-domain"/>
    <property type="match status" value="1"/>
</dbReference>
<dbReference type="PROSITE" id="PS00651">
    <property type="entry name" value="RIBOSOMAL_L9"/>
    <property type="match status" value="1"/>
</dbReference>
<protein>
    <recommendedName>
        <fullName evidence="1">Large ribosomal subunit protein bL9</fullName>
    </recommendedName>
    <alternativeName>
        <fullName evidence="2">50S ribosomal protein L9</fullName>
    </alternativeName>
</protein>
<gene>
    <name evidence="1" type="primary">rplI</name>
    <name type="ordered locus">LMOf2365_0062</name>
</gene>
<name>RL9_LISMF</name>